<feature type="signal peptide" evidence="2">
    <location>
        <begin position="1"/>
        <end position="21"/>
    </location>
</feature>
<feature type="chain" id="PRO_5014161870" description="Complement component C6">
    <location>
        <begin position="22"/>
        <end position="934"/>
    </location>
</feature>
<feature type="transmembrane region" description="Beta stranded" evidence="1">
    <location>
        <begin position="278"/>
        <end position="290"/>
    </location>
</feature>
<feature type="transmembrane region" description="Beta stranded" evidence="1">
    <location>
        <begin position="402"/>
        <end position="415"/>
    </location>
</feature>
<feature type="domain" description="TSP type-1 1" evidence="4">
    <location>
        <begin position="22"/>
        <end position="79"/>
    </location>
</feature>
<feature type="domain" description="TSP type-1 2" evidence="4">
    <location>
        <begin position="81"/>
        <end position="134"/>
    </location>
</feature>
<feature type="domain" description="LDL-receptor class A" evidence="3">
    <location>
        <begin position="138"/>
        <end position="175"/>
    </location>
</feature>
<feature type="domain" description="MACPF" evidence="2">
    <location>
        <begin position="176"/>
        <end position="522"/>
    </location>
</feature>
<feature type="domain" description="EGF-like" evidence="1">
    <location>
        <begin position="523"/>
        <end position="553"/>
    </location>
</feature>
<feature type="domain" description="TSP type-1 3" evidence="4">
    <location>
        <begin position="565"/>
        <end position="612"/>
    </location>
</feature>
<feature type="domain" description="Sushi 1" evidence="5">
    <location>
        <begin position="642"/>
        <end position="701"/>
    </location>
</feature>
<feature type="domain" description="Sushi 2" evidence="5">
    <location>
        <begin position="702"/>
        <end position="763"/>
    </location>
</feature>
<feature type="domain" description="Kazal-like 1" evidence="6">
    <location>
        <begin position="785"/>
        <end position="839"/>
    </location>
</feature>
<feature type="domain" description="Kazal-like 2" evidence="6">
    <location>
        <begin position="876"/>
        <end position="934"/>
    </location>
</feature>
<feature type="region of interest" description="CCP 1" evidence="1">
    <location>
        <begin position="611"/>
        <end position="688"/>
    </location>
</feature>
<feature type="region of interest" description="C5b-binding domain" evidence="1">
    <location>
        <begin position="642"/>
        <end position="934"/>
    </location>
</feature>
<feature type="region of interest" description="CCP 2" evidence="1">
    <location>
        <begin position="689"/>
        <end position="765"/>
    </location>
</feature>
<feature type="region of interest" description="Factor I module (FIM) 1" evidence="1">
    <location>
        <begin position="766"/>
        <end position="840"/>
    </location>
</feature>
<feature type="region of interest" description="Factor I module (FIM) 2" evidence="1">
    <location>
        <begin position="858"/>
        <end position="934"/>
    </location>
</feature>
<feature type="binding site" evidence="1">
    <location>
        <position position="156"/>
    </location>
    <ligand>
        <name>Ca(2+)</name>
        <dbReference type="ChEBI" id="CHEBI:29108"/>
    </ligand>
</feature>
<feature type="binding site" evidence="1">
    <location>
        <position position="159"/>
    </location>
    <ligand>
        <name>Ca(2+)</name>
        <dbReference type="ChEBI" id="CHEBI:29108"/>
    </ligand>
</feature>
<feature type="binding site" evidence="1">
    <location>
        <position position="161"/>
    </location>
    <ligand>
        <name>Ca(2+)</name>
        <dbReference type="ChEBI" id="CHEBI:29108"/>
    </ligand>
</feature>
<feature type="binding site" evidence="1">
    <location>
        <position position="163"/>
    </location>
    <ligand>
        <name>Ca(2+)</name>
        <dbReference type="ChEBI" id="CHEBI:29108"/>
    </ligand>
</feature>
<feature type="binding site" evidence="1">
    <location>
        <position position="169"/>
    </location>
    <ligand>
        <name>Ca(2+)</name>
        <dbReference type="ChEBI" id="CHEBI:29108"/>
    </ligand>
</feature>
<feature type="binding site" evidence="1">
    <location>
        <position position="170"/>
    </location>
    <ligand>
        <name>Ca(2+)</name>
        <dbReference type="ChEBI" id="CHEBI:29108"/>
    </ligand>
</feature>
<feature type="glycosylation site" description="N-linked (GlcNAc...) asparagine" evidence="2">
    <location>
        <position position="324"/>
    </location>
</feature>
<feature type="glycosylation site" description="N-linked (GlcNAc...) asparagine" evidence="2">
    <location>
        <position position="825"/>
    </location>
</feature>
<feature type="glycosylation site" description="N-linked (GlcNAc...) asparagine" evidence="2">
    <location>
        <position position="855"/>
    </location>
</feature>
<feature type="glycosylation site" description="N-linked (GlcNAc...) asparagine" evidence="2">
    <location>
        <position position="872"/>
    </location>
</feature>
<feature type="disulfide bond" evidence="1">
    <location>
        <begin position="22"/>
        <end position="61"/>
    </location>
</feature>
<feature type="disulfide bond" evidence="1">
    <location>
        <begin position="24"/>
        <end position="65"/>
    </location>
</feature>
<feature type="disulfide bond" evidence="1">
    <location>
        <begin position="35"/>
        <end position="73"/>
    </location>
</feature>
<feature type="disulfide bond" evidence="1">
    <location>
        <begin position="39"/>
        <end position="78"/>
    </location>
</feature>
<feature type="disulfide bond" evidence="1">
    <location>
        <begin position="82"/>
        <end position="117"/>
    </location>
</feature>
<feature type="disulfide bond" evidence="1">
    <location>
        <begin position="93"/>
        <end position="127"/>
    </location>
</feature>
<feature type="disulfide bond" evidence="1">
    <location>
        <begin position="96"/>
        <end position="133"/>
    </location>
</feature>
<feature type="disulfide bond" evidence="1">
    <location>
        <begin position="140"/>
        <end position="151"/>
    </location>
</feature>
<feature type="disulfide bond" evidence="3">
    <location>
        <begin position="146"/>
        <end position="164"/>
    </location>
</feature>
<feature type="disulfide bond" evidence="3">
    <location>
        <begin position="158"/>
        <end position="173"/>
    </location>
</feature>
<feature type="disulfide bond" evidence="1">
    <location>
        <begin position="180"/>
        <end position="218"/>
    </location>
</feature>
<feature type="disulfide bond" evidence="1">
    <location>
        <begin position="399"/>
        <end position="420"/>
    </location>
</feature>
<feature type="disulfide bond" evidence="1">
    <location>
        <begin position="499"/>
        <end position="623"/>
    </location>
</feature>
<feature type="disulfide bond" evidence="1">
    <location>
        <begin position="521"/>
        <end position="570"/>
    </location>
</feature>
<feature type="disulfide bond" evidence="1">
    <location>
        <begin position="523"/>
        <end position="539"/>
    </location>
</feature>
<feature type="disulfide bond" evidence="1">
    <location>
        <begin position="526"/>
        <end position="541"/>
    </location>
</feature>
<feature type="disulfide bond" evidence="1">
    <location>
        <begin position="543"/>
        <end position="552"/>
    </location>
</feature>
<feature type="disulfide bond" evidence="1">
    <location>
        <begin position="577"/>
        <end position="611"/>
    </location>
</feature>
<feature type="disulfide bond" evidence="1">
    <location>
        <begin position="589"/>
        <end position="601"/>
    </location>
</feature>
<feature type="disulfide bond" evidence="1">
    <location>
        <begin position="644"/>
        <end position="686"/>
    </location>
</feature>
<feature type="disulfide bond" evidence="5">
    <location>
        <begin position="672"/>
        <end position="699"/>
    </location>
</feature>
<feature type="disulfide bond" evidence="1">
    <location>
        <begin position="704"/>
        <end position="746"/>
    </location>
</feature>
<feature type="disulfide bond" evidence="1">
    <location>
        <begin position="732"/>
        <end position="761"/>
    </location>
</feature>
<feature type="disulfide bond" evidence="1">
    <location>
        <begin position="773"/>
        <end position="823"/>
    </location>
</feature>
<feature type="disulfide bond" evidence="1">
    <location>
        <begin position="784"/>
        <end position="801"/>
    </location>
</feature>
<feature type="disulfide bond" evidence="1">
    <location>
        <begin position="786"/>
        <end position="837"/>
    </location>
</feature>
<feature type="disulfide bond" evidence="1">
    <location>
        <begin position="793"/>
        <end position="816"/>
    </location>
</feature>
<feature type="disulfide bond" evidence="1">
    <location>
        <begin position="862"/>
        <end position="873"/>
    </location>
</feature>
<feature type="disulfide bond" evidence="1">
    <location>
        <begin position="867"/>
        <end position="919"/>
    </location>
</feature>
<feature type="disulfide bond" evidence="1">
    <location>
        <begin position="880"/>
        <end position="897"/>
    </location>
</feature>
<feature type="disulfide bond" evidence="1">
    <location>
        <begin position="882"/>
        <end position="932"/>
    </location>
</feature>
<feature type="disulfide bond" evidence="1">
    <location>
        <begin position="888"/>
        <end position="912"/>
    </location>
</feature>
<feature type="splice variant" id="VSP_062584" description="In isoform 2.">
    <original>AILTKS</original>
    <variation>GVRDHP</variation>
    <location>
        <begin position="764"/>
        <end position="769"/>
    </location>
</feature>
<feature type="splice variant" id="VSP_062585" description="In isoform 2.">
    <location>
        <begin position="770"/>
        <end position="934"/>
    </location>
</feature>
<feature type="sequence conflict" description="In Ref. 1; AAF14577." evidence="7" ref="1">
    <original>K</original>
    <variation>T</variation>
    <location>
        <position position="631"/>
    </location>
</feature>
<gene>
    <name evidence="8" type="primary">C6</name>
</gene>
<reference key="1">
    <citation type="journal article" date="2000" name="Immunogenetics">
        <title>Molecular cloning of the C6A form cDNA of the mouse sixth complement component: functional integrity despite the absence of factor I modules.</title>
        <authorList>
            <person name="Yu J.X."/>
            <person name="Bradt B.M."/>
            <person name="Cooper N.R."/>
        </authorList>
    </citation>
    <scope>NUCLEOTIDE SEQUENCE [MRNA] (ISOFORM 2)</scope>
</reference>
<reference key="2">
    <citation type="journal article" date="2009" name="PLoS Biol.">
        <title>Lineage-specific biology revealed by a finished genome assembly of the mouse.</title>
        <authorList>
            <person name="Church D.M."/>
            <person name="Goodstadt L."/>
            <person name="Hillier L.W."/>
            <person name="Zody M.C."/>
            <person name="Goldstein S."/>
            <person name="She X."/>
            <person name="Bult C.J."/>
            <person name="Agarwala R."/>
            <person name="Cherry J.L."/>
            <person name="DiCuccio M."/>
            <person name="Hlavina W."/>
            <person name="Kapustin Y."/>
            <person name="Meric P."/>
            <person name="Maglott D."/>
            <person name="Birtle Z."/>
            <person name="Marques A.C."/>
            <person name="Graves T."/>
            <person name="Zhou S."/>
            <person name="Teague B."/>
            <person name="Potamousis K."/>
            <person name="Churas C."/>
            <person name="Place M."/>
            <person name="Herschleb J."/>
            <person name="Runnheim R."/>
            <person name="Forrest D."/>
            <person name="Amos-Landgraf J."/>
            <person name="Schwartz D.C."/>
            <person name="Cheng Z."/>
            <person name="Lindblad-Toh K."/>
            <person name="Eichler E.E."/>
            <person name="Ponting C.P."/>
        </authorList>
    </citation>
    <scope>NUCLEOTIDE SEQUENCE [LARGE SCALE GENOMIC DNA]</scope>
    <source>
        <strain>C57BL/6J</strain>
    </source>
</reference>
<reference key="3">
    <citation type="journal article" date="2004" name="Genome Res.">
        <title>The status, quality, and expansion of the NIH full-length cDNA project: the Mammalian Gene Collection (MGC).</title>
        <authorList>
            <consortium name="The MGC Project Team"/>
        </authorList>
    </citation>
    <scope>NUCLEOTIDE SEQUENCE [LARGE SCALE MRNA] (ISOFORM 2)</scope>
    <source>
        <strain>FVB/N</strain>
        <tissue>Liver</tissue>
    </source>
</reference>
<reference key="4">
    <citation type="journal article" date="2005" name="Science">
        <title>The transcriptional landscape of the mammalian genome.</title>
        <authorList>
            <person name="Carninci P."/>
            <person name="Kasukawa T."/>
            <person name="Katayama S."/>
            <person name="Gough J."/>
            <person name="Frith M.C."/>
            <person name="Maeda N."/>
            <person name="Oyama R."/>
            <person name="Ravasi T."/>
            <person name="Lenhard B."/>
            <person name="Wells C."/>
            <person name="Kodzius R."/>
            <person name="Shimokawa K."/>
            <person name="Bajic V.B."/>
            <person name="Brenner S.E."/>
            <person name="Batalov S."/>
            <person name="Forrest A.R."/>
            <person name="Zavolan M."/>
            <person name="Davis M.J."/>
            <person name="Wilming L.G."/>
            <person name="Aidinis V."/>
            <person name="Allen J.E."/>
            <person name="Ambesi-Impiombato A."/>
            <person name="Apweiler R."/>
            <person name="Aturaliya R.N."/>
            <person name="Bailey T.L."/>
            <person name="Bansal M."/>
            <person name="Baxter L."/>
            <person name="Beisel K.W."/>
            <person name="Bersano T."/>
            <person name="Bono H."/>
            <person name="Chalk A.M."/>
            <person name="Chiu K.P."/>
            <person name="Choudhary V."/>
            <person name="Christoffels A."/>
            <person name="Clutterbuck D.R."/>
            <person name="Crowe M.L."/>
            <person name="Dalla E."/>
            <person name="Dalrymple B.P."/>
            <person name="de Bono B."/>
            <person name="Della Gatta G."/>
            <person name="di Bernardo D."/>
            <person name="Down T."/>
            <person name="Engstrom P."/>
            <person name="Fagiolini M."/>
            <person name="Faulkner G."/>
            <person name="Fletcher C.F."/>
            <person name="Fukushima T."/>
            <person name="Furuno M."/>
            <person name="Futaki S."/>
            <person name="Gariboldi M."/>
            <person name="Georgii-Hemming P."/>
            <person name="Gingeras T.R."/>
            <person name="Gojobori T."/>
            <person name="Green R.E."/>
            <person name="Gustincich S."/>
            <person name="Harbers M."/>
            <person name="Hayashi Y."/>
            <person name="Hensch T.K."/>
            <person name="Hirokawa N."/>
            <person name="Hill D."/>
            <person name="Huminiecki L."/>
            <person name="Iacono M."/>
            <person name="Ikeo K."/>
            <person name="Iwama A."/>
            <person name="Ishikawa T."/>
            <person name="Jakt M."/>
            <person name="Kanapin A."/>
            <person name="Katoh M."/>
            <person name="Kawasawa Y."/>
            <person name="Kelso J."/>
            <person name="Kitamura H."/>
            <person name="Kitano H."/>
            <person name="Kollias G."/>
            <person name="Krishnan S.P."/>
            <person name="Kruger A."/>
            <person name="Kummerfeld S.K."/>
            <person name="Kurochkin I.V."/>
            <person name="Lareau L.F."/>
            <person name="Lazarevic D."/>
            <person name="Lipovich L."/>
            <person name="Liu J."/>
            <person name="Liuni S."/>
            <person name="McWilliam S."/>
            <person name="Madan Babu M."/>
            <person name="Madera M."/>
            <person name="Marchionni L."/>
            <person name="Matsuda H."/>
            <person name="Matsuzawa S."/>
            <person name="Miki H."/>
            <person name="Mignone F."/>
            <person name="Miyake S."/>
            <person name="Morris K."/>
            <person name="Mottagui-Tabar S."/>
            <person name="Mulder N."/>
            <person name="Nakano N."/>
            <person name="Nakauchi H."/>
            <person name="Ng P."/>
            <person name="Nilsson R."/>
            <person name="Nishiguchi S."/>
            <person name="Nishikawa S."/>
            <person name="Nori F."/>
            <person name="Ohara O."/>
            <person name="Okazaki Y."/>
            <person name="Orlando V."/>
            <person name="Pang K.C."/>
            <person name="Pavan W.J."/>
            <person name="Pavesi G."/>
            <person name="Pesole G."/>
            <person name="Petrovsky N."/>
            <person name="Piazza S."/>
            <person name="Reed J."/>
            <person name="Reid J.F."/>
            <person name="Ring B.Z."/>
            <person name="Ringwald M."/>
            <person name="Rost B."/>
            <person name="Ruan Y."/>
            <person name="Salzberg S.L."/>
            <person name="Sandelin A."/>
            <person name="Schneider C."/>
            <person name="Schoenbach C."/>
            <person name="Sekiguchi K."/>
            <person name="Semple C.A."/>
            <person name="Seno S."/>
            <person name="Sessa L."/>
            <person name="Sheng Y."/>
            <person name="Shibata Y."/>
            <person name="Shimada H."/>
            <person name="Shimada K."/>
            <person name="Silva D."/>
            <person name="Sinclair B."/>
            <person name="Sperling S."/>
            <person name="Stupka E."/>
            <person name="Sugiura K."/>
            <person name="Sultana R."/>
            <person name="Takenaka Y."/>
            <person name="Taki K."/>
            <person name="Tammoja K."/>
            <person name="Tan S.L."/>
            <person name="Tang S."/>
            <person name="Taylor M.S."/>
            <person name="Tegner J."/>
            <person name="Teichmann S.A."/>
            <person name="Ueda H.R."/>
            <person name="van Nimwegen E."/>
            <person name="Verardo R."/>
            <person name="Wei C.L."/>
            <person name="Yagi K."/>
            <person name="Yamanishi H."/>
            <person name="Zabarovsky E."/>
            <person name="Zhu S."/>
            <person name="Zimmer A."/>
            <person name="Hide W."/>
            <person name="Bult C."/>
            <person name="Grimmond S.M."/>
            <person name="Teasdale R.D."/>
            <person name="Liu E.T."/>
            <person name="Brusic V."/>
            <person name="Quackenbush J."/>
            <person name="Wahlestedt C."/>
            <person name="Mattick J.S."/>
            <person name="Hume D.A."/>
            <person name="Kai C."/>
            <person name="Sasaki D."/>
            <person name="Tomaru Y."/>
            <person name="Fukuda S."/>
            <person name="Kanamori-Katayama M."/>
            <person name="Suzuki M."/>
            <person name="Aoki J."/>
            <person name="Arakawa T."/>
            <person name="Iida J."/>
            <person name="Imamura K."/>
            <person name="Itoh M."/>
            <person name="Kato T."/>
            <person name="Kawaji H."/>
            <person name="Kawagashira N."/>
            <person name="Kawashima T."/>
            <person name="Kojima M."/>
            <person name="Kondo S."/>
            <person name="Konno H."/>
            <person name="Nakano K."/>
            <person name="Ninomiya N."/>
            <person name="Nishio T."/>
            <person name="Okada M."/>
            <person name="Plessy C."/>
            <person name="Shibata K."/>
            <person name="Shiraki T."/>
            <person name="Suzuki S."/>
            <person name="Tagami M."/>
            <person name="Waki K."/>
            <person name="Watahiki A."/>
            <person name="Okamura-Oho Y."/>
            <person name="Suzuki H."/>
            <person name="Kawai J."/>
            <person name="Hayashizaki Y."/>
        </authorList>
    </citation>
    <scope>NUCLEOTIDE SEQUENCE [LARGE SCALE MRNA] OF 1-261</scope>
    <source>
        <strain>C57BL/6J</strain>
        <tissue>Aorta</tissue>
    </source>
</reference>
<dbReference type="EMBL" id="AF184900">
    <property type="protein sequence ID" value="AAF14577.1"/>
    <property type="molecule type" value="mRNA"/>
</dbReference>
<dbReference type="EMBL" id="BC011251">
    <property type="protein sequence ID" value="AAH11251.1"/>
    <property type="molecule type" value="mRNA"/>
</dbReference>
<dbReference type="EMBL" id="AK041057">
    <property type="protein sequence ID" value="BAC30803.1"/>
    <property type="molecule type" value="mRNA"/>
</dbReference>
<dbReference type="RefSeq" id="NP_057913.2">
    <property type="nucleotide sequence ID" value="NM_016704.2"/>
</dbReference>
<dbReference type="SMR" id="E9Q6D8"/>
<dbReference type="ComplexPortal" id="CPX-6202">
    <property type="entry name" value="Membrane attack complex"/>
</dbReference>
<dbReference type="FunCoup" id="E9Q6D8">
    <property type="interactions" value="33"/>
</dbReference>
<dbReference type="PhosphoSitePlus" id="E9Q6D8"/>
<dbReference type="PaxDb" id="10090-ENSMUSP00000125693"/>
<dbReference type="PeptideAtlas" id="E9Q6D8"/>
<dbReference type="ProteomicsDB" id="365792"/>
<dbReference type="Antibodypedia" id="10692">
    <property type="antibodies" value="311 antibodies from 34 providers"/>
</dbReference>
<dbReference type="DNASU" id="12274"/>
<dbReference type="Ensembl" id="ENSMUST00000162350.3">
    <property type="protein sequence ID" value="ENSMUSP00000125693.3"/>
    <property type="gene ID" value="ENSMUSG00000022181.17"/>
</dbReference>
<dbReference type="GeneID" id="12274"/>
<dbReference type="KEGG" id="mmu:12274"/>
<dbReference type="UCSC" id="uc007vco.2">
    <property type="organism name" value="mouse"/>
</dbReference>
<dbReference type="UCSC" id="uc011zqw.1">
    <property type="organism name" value="mouse"/>
</dbReference>
<dbReference type="AGR" id="MGI:88233"/>
<dbReference type="CTD" id="729"/>
<dbReference type="MGI" id="MGI:88233">
    <property type="gene designation" value="C6"/>
</dbReference>
<dbReference type="VEuPathDB" id="HostDB:ENSMUSG00000022181"/>
<dbReference type="eggNOG" id="ENOG502QPIM">
    <property type="taxonomic scope" value="Eukaryota"/>
</dbReference>
<dbReference type="GeneTree" id="ENSGT00940000156814"/>
<dbReference type="HOGENOM" id="CLU_014082_0_0_1"/>
<dbReference type="InParanoid" id="E9Q6D8"/>
<dbReference type="OMA" id="YYRKNFC"/>
<dbReference type="OrthoDB" id="9867095at2759"/>
<dbReference type="PhylomeDB" id="E9Q6D8"/>
<dbReference type="TreeFam" id="TF330498"/>
<dbReference type="Reactome" id="R-MMU-166665">
    <property type="pathway name" value="Terminal pathway of complement"/>
</dbReference>
<dbReference type="Reactome" id="R-MMU-977606">
    <property type="pathway name" value="Regulation of Complement cascade"/>
</dbReference>
<dbReference type="BioGRID-ORCS" id="12274">
    <property type="hits" value="1 hit in 61 CRISPR screens"/>
</dbReference>
<dbReference type="Proteomes" id="UP000000589">
    <property type="component" value="Chromosome 15"/>
</dbReference>
<dbReference type="RNAct" id="E9Q6D8">
    <property type="molecule type" value="protein"/>
</dbReference>
<dbReference type="Bgee" id="ENSMUSG00000022181">
    <property type="expression patterns" value="Expressed in left lobe of liver and 41 other cell types or tissues"/>
</dbReference>
<dbReference type="ExpressionAtlas" id="E9Q6D8">
    <property type="expression patterns" value="baseline and differential"/>
</dbReference>
<dbReference type="GO" id="GO:0005576">
    <property type="term" value="C:extracellular region"/>
    <property type="evidence" value="ECO:0007669"/>
    <property type="project" value="UniProtKB-SubCell"/>
</dbReference>
<dbReference type="GO" id="GO:0005579">
    <property type="term" value="C:membrane attack complex"/>
    <property type="evidence" value="ECO:0000266"/>
    <property type="project" value="ComplexPortal"/>
</dbReference>
<dbReference type="GO" id="GO:0005886">
    <property type="term" value="C:plasma membrane"/>
    <property type="evidence" value="ECO:0000303"/>
    <property type="project" value="ComplexPortal"/>
</dbReference>
<dbReference type="GO" id="GO:0006958">
    <property type="term" value="P:complement activation, classical pathway"/>
    <property type="evidence" value="ECO:0007669"/>
    <property type="project" value="UniProtKB-KW"/>
</dbReference>
<dbReference type="GO" id="GO:0001701">
    <property type="term" value="P:in utero embryonic development"/>
    <property type="evidence" value="ECO:0000316"/>
    <property type="project" value="MGI"/>
</dbReference>
<dbReference type="GO" id="GO:0045087">
    <property type="term" value="P:innate immune response"/>
    <property type="evidence" value="ECO:0007669"/>
    <property type="project" value="UniProtKB-KW"/>
</dbReference>
<dbReference type="GO" id="GO:0031640">
    <property type="term" value="P:killing of cells of another organism"/>
    <property type="evidence" value="ECO:0007669"/>
    <property type="project" value="UniProtKB-KW"/>
</dbReference>
<dbReference type="GO" id="GO:0050778">
    <property type="term" value="P:positive regulation of immune response"/>
    <property type="evidence" value="ECO:0000303"/>
    <property type="project" value="ComplexPortal"/>
</dbReference>
<dbReference type="CDD" id="cd00033">
    <property type="entry name" value="CCP"/>
    <property type="match status" value="2"/>
</dbReference>
<dbReference type="CDD" id="cd00112">
    <property type="entry name" value="LDLa"/>
    <property type="match status" value="1"/>
</dbReference>
<dbReference type="FunFam" id="4.10.400.10:FF:000065">
    <property type="entry name" value="Transmembrane protease serine 7"/>
    <property type="match status" value="1"/>
</dbReference>
<dbReference type="FunFam" id="2.20.100.10:FF:000002">
    <property type="entry name" value="Unc-5 netrin receptor C"/>
    <property type="match status" value="1"/>
</dbReference>
<dbReference type="Gene3D" id="3.30.60.30">
    <property type="match status" value="2"/>
</dbReference>
<dbReference type="Gene3D" id="2.10.70.10">
    <property type="entry name" value="Complement Module, domain 1"/>
    <property type="match status" value="2"/>
</dbReference>
<dbReference type="Gene3D" id="4.10.400.10">
    <property type="entry name" value="Low-density Lipoprotein Receptor"/>
    <property type="match status" value="1"/>
</dbReference>
<dbReference type="Gene3D" id="2.20.100.10">
    <property type="entry name" value="Thrombospondin type-1 (TSP1) repeat"/>
    <property type="match status" value="3"/>
</dbReference>
<dbReference type="InterPro" id="IPR048828">
    <property type="entry name" value="C6_KAZAL"/>
</dbReference>
<dbReference type="InterPro" id="IPR048831">
    <property type="entry name" value="C8A_B_C6_EGF-like"/>
</dbReference>
<dbReference type="InterPro" id="IPR003884">
    <property type="entry name" value="FacI_MAC"/>
</dbReference>
<dbReference type="InterPro" id="IPR002350">
    <property type="entry name" value="Kazal_dom"/>
</dbReference>
<dbReference type="InterPro" id="IPR036055">
    <property type="entry name" value="LDL_receptor-like_sf"/>
</dbReference>
<dbReference type="InterPro" id="IPR023415">
    <property type="entry name" value="LDLR_class-A_CS"/>
</dbReference>
<dbReference type="InterPro" id="IPR002172">
    <property type="entry name" value="LDrepeatLR_classA_rpt"/>
</dbReference>
<dbReference type="InterPro" id="IPR001862">
    <property type="entry name" value="MAC_perforin"/>
</dbReference>
<dbReference type="InterPro" id="IPR020864">
    <property type="entry name" value="MACPF"/>
</dbReference>
<dbReference type="InterPro" id="IPR020863">
    <property type="entry name" value="MACPF_CS"/>
</dbReference>
<dbReference type="InterPro" id="IPR035976">
    <property type="entry name" value="Sushi/SCR/CCP_sf"/>
</dbReference>
<dbReference type="InterPro" id="IPR000436">
    <property type="entry name" value="Sushi_SCR_CCP_dom"/>
</dbReference>
<dbReference type="InterPro" id="IPR000884">
    <property type="entry name" value="TSP1_rpt"/>
</dbReference>
<dbReference type="InterPro" id="IPR036383">
    <property type="entry name" value="TSP1_rpt_sf"/>
</dbReference>
<dbReference type="PANTHER" id="PTHR45742">
    <property type="entry name" value="COMPLEMENT COMPONENT C6"/>
    <property type="match status" value="1"/>
</dbReference>
<dbReference type="PANTHER" id="PTHR45742:SF4">
    <property type="entry name" value="COMPLEMENT COMPONENT C6"/>
    <property type="match status" value="1"/>
</dbReference>
<dbReference type="Pfam" id="PF21195">
    <property type="entry name" value="EGF_C8A_B_C6"/>
    <property type="match status" value="1"/>
</dbReference>
<dbReference type="Pfam" id="PF21288">
    <property type="entry name" value="Kazal_C6"/>
    <property type="match status" value="1"/>
</dbReference>
<dbReference type="Pfam" id="PF00057">
    <property type="entry name" value="Ldl_recept_a"/>
    <property type="match status" value="1"/>
</dbReference>
<dbReference type="Pfam" id="PF01823">
    <property type="entry name" value="MACPF"/>
    <property type="match status" value="1"/>
</dbReference>
<dbReference type="Pfam" id="PF00084">
    <property type="entry name" value="Sushi"/>
    <property type="match status" value="2"/>
</dbReference>
<dbReference type="Pfam" id="PF00090">
    <property type="entry name" value="TSP_1"/>
    <property type="match status" value="3"/>
</dbReference>
<dbReference type="PRINTS" id="PR00764">
    <property type="entry name" value="COMPLEMENTC9"/>
</dbReference>
<dbReference type="SMART" id="SM00032">
    <property type="entry name" value="CCP"/>
    <property type="match status" value="2"/>
</dbReference>
<dbReference type="SMART" id="SM00057">
    <property type="entry name" value="FIMAC"/>
    <property type="match status" value="2"/>
</dbReference>
<dbReference type="SMART" id="SM00192">
    <property type="entry name" value="LDLa"/>
    <property type="match status" value="1"/>
</dbReference>
<dbReference type="SMART" id="SM00457">
    <property type="entry name" value="MACPF"/>
    <property type="match status" value="1"/>
</dbReference>
<dbReference type="SMART" id="SM00209">
    <property type="entry name" value="TSP1"/>
    <property type="match status" value="3"/>
</dbReference>
<dbReference type="SUPFAM" id="SSF57535">
    <property type="entry name" value="Complement control module/SCR domain"/>
    <property type="match status" value="2"/>
</dbReference>
<dbReference type="SUPFAM" id="SSF57424">
    <property type="entry name" value="LDL receptor-like module"/>
    <property type="match status" value="1"/>
</dbReference>
<dbReference type="SUPFAM" id="SSF82895">
    <property type="entry name" value="TSP-1 type 1 repeat"/>
    <property type="match status" value="3"/>
</dbReference>
<dbReference type="PROSITE" id="PS00022">
    <property type="entry name" value="EGF_1"/>
    <property type="match status" value="1"/>
</dbReference>
<dbReference type="PROSITE" id="PS51465">
    <property type="entry name" value="KAZAL_2"/>
    <property type="match status" value="1"/>
</dbReference>
<dbReference type="PROSITE" id="PS01209">
    <property type="entry name" value="LDLRA_1"/>
    <property type="match status" value="1"/>
</dbReference>
<dbReference type="PROSITE" id="PS50068">
    <property type="entry name" value="LDLRA_2"/>
    <property type="match status" value="1"/>
</dbReference>
<dbReference type="PROSITE" id="PS00279">
    <property type="entry name" value="MACPF_1"/>
    <property type="match status" value="1"/>
</dbReference>
<dbReference type="PROSITE" id="PS51412">
    <property type="entry name" value="MACPF_2"/>
    <property type="match status" value="1"/>
</dbReference>
<dbReference type="PROSITE" id="PS50923">
    <property type="entry name" value="SUSHI"/>
    <property type="match status" value="2"/>
</dbReference>
<dbReference type="PROSITE" id="PS50092">
    <property type="entry name" value="TSP1"/>
    <property type="match status" value="3"/>
</dbReference>
<proteinExistence type="evidence at transcript level"/>
<evidence type="ECO:0000250" key="1">
    <source>
        <dbReference type="UniProtKB" id="P13671"/>
    </source>
</evidence>
<evidence type="ECO:0000255" key="2"/>
<evidence type="ECO:0000255" key="3">
    <source>
        <dbReference type="PROSITE-ProRule" id="PRU00124"/>
    </source>
</evidence>
<evidence type="ECO:0000255" key="4">
    <source>
        <dbReference type="PROSITE-ProRule" id="PRU00210"/>
    </source>
</evidence>
<evidence type="ECO:0000255" key="5">
    <source>
        <dbReference type="PROSITE-ProRule" id="PRU00302"/>
    </source>
</evidence>
<evidence type="ECO:0000255" key="6">
    <source>
        <dbReference type="PROSITE-ProRule" id="PRU00798"/>
    </source>
</evidence>
<evidence type="ECO:0000305" key="7"/>
<evidence type="ECO:0000312" key="8">
    <source>
        <dbReference type="MGI" id="MGI:88233"/>
    </source>
</evidence>
<protein>
    <recommendedName>
        <fullName evidence="7">Complement component C6</fullName>
    </recommendedName>
</protein>
<comment type="function">
    <text evidence="1">Component of the membrane attack complex (MAC), a multiprotein complex activated by the complement cascade, which inserts into a target cell membrane and forms a pore, leading to target cell membrane rupture and cell lysis. The MAC is initiated by proteolytic cleavage of C5 into complement C5b in response to the classical, alternative, lectin and GZMK complement pathways. The complement pathways consist in a cascade of proteins that leads to phagocytosis and breakdown of pathogens and signaling that strengthens the adaptive immune system. Together with component C5b, involved in MAC complex assembly: complement C5b and C6 associate with the outer leaflet of target cell membrane, reducing the energy for membrane bending.</text>
</comment>
<comment type="activity regulation">
    <text evidence="1">Membrane attack complex (MAC) assembly is inhibited by CD59, thereby protecting self-cells from damage during complement activation. MAC assembly is also inhibited by clusterin (CLU) chaperones that inhibit polymerization of C9.</text>
</comment>
<comment type="subunit">
    <text evidence="1">Component of the membrane attack complex (MAC), composed of complement C5b, C6, C7, C8A, C8B, C8G and multiple copies of the pore-forming subunit C9.</text>
</comment>
<comment type="subcellular location">
    <subcellularLocation>
        <location evidence="1">Secreted</location>
    </subcellularLocation>
    <subcellularLocation>
        <location evidence="1">Target cell membrane</location>
        <topology evidence="1">Multi-pass membrane protein</topology>
    </subcellularLocation>
    <text evidence="1">Secreted as soluble protein. Inserts into the cell membrane of target cells.</text>
</comment>
<comment type="alternative products">
    <event type="alternative splicing"/>
    <isoform>
        <id>E9Q6D8-1</id>
        <name>1</name>
        <sequence type="displayed"/>
    </isoform>
    <isoform>
        <id>E9Q6D8-2</id>
        <name>2</name>
        <sequence type="described" ref="VSP_062584 VSP_062585"/>
    </isoform>
</comment>
<comment type="PTM">
    <text evidence="1">All cysteine residues are assumed to be cross-linked to one another. Individual modules containing an even number of conserved cysteine residues are supposed to have disulfide linkages only within the same module.</text>
</comment>
<comment type="similarity">
    <text evidence="7">Belongs to the complement C6/C7/C8/C9 family.</text>
</comment>
<keyword id="KW-0025">Alternative splicing</keyword>
<keyword id="KW-0106">Calcium</keyword>
<keyword id="KW-0180">Complement pathway</keyword>
<keyword id="KW-0204">Cytolysis</keyword>
<keyword id="KW-1015">Disulfide bond</keyword>
<keyword id="KW-0245">EGF-like domain</keyword>
<keyword id="KW-0325">Glycoprotein</keyword>
<keyword id="KW-0391">Immunity</keyword>
<keyword id="KW-0399">Innate immunity</keyword>
<keyword id="KW-0472">Membrane</keyword>
<keyword id="KW-0473">Membrane attack complex</keyword>
<keyword id="KW-0479">Metal-binding</keyword>
<keyword id="KW-1185">Reference proteome</keyword>
<keyword id="KW-0677">Repeat</keyword>
<keyword id="KW-0964">Secreted</keyword>
<keyword id="KW-0732">Signal</keyword>
<keyword id="KW-0768">Sushi</keyword>
<keyword id="KW-1052">Target cell membrane</keyword>
<keyword id="KW-1053">Target membrane</keyword>
<keyword id="KW-0812">Transmembrane</keyword>
<keyword id="KW-1134">Transmembrane beta strand</keyword>
<organism>
    <name type="scientific">Mus musculus</name>
    <name type="common">Mouse</name>
    <dbReference type="NCBI Taxonomy" id="10090"/>
    <lineage>
        <taxon>Eukaryota</taxon>
        <taxon>Metazoa</taxon>
        <taxon>Chordata</taxon>
        <taxon>Craniata</taxon>
        <taxon>Vertebrata</taxon>
        <taxon>Euteleostomi</taxon>
        <taxon>Mammalia</taxon>
        <taxon>Eutheria</taxon>
        <taxon>Euarchontoglires</taxon>
        <taxon>Glires</taxon>
        <taxon>Rodentia</taxon>
        <taxon>Myomorpha</taxon>
        <taxon>Muroidea</taxon>
        <taxon>Muridae</taxon>
        <taxon>Murinae</taxon>
        <taxon>Mus</taxon>
        <taxon>Mus</taxon>
    </lineage>
</organism>
<name>CO6_MOUSE</name>
<accession>E9Q6D8</accession>
<accession>Q8BRY4</accession>
<accession>Q91X70</accession>
<accession>Q9QXT7</accession>
<sequence>MTRHLTLCFILLVMLIDKSEACFCDHYPWTHWSSCSKSCNSGTQSRQRQVVVNDYYWKNLCDKLCIKQETRECNLQTCPINCVLGDYGTWSDCDPCTEKQVKVKSVLRPSQFGGQPCTEPLVTFQPCVPSKLCKIEETNCKNKFLCDSGRCIPSKLECNGENDCGDNSDERNCGRTKPVCTRIYTPIPSVQLMGTGFHFLAGEPRGEVLDNSFTGGICKLVKTSRASNPYRVSANLENVNFEVQTIEDDLKTEFYKNLISFEKNKNEDSLSVDERTKFFPIPIFHFSEKNEHSHYSSAFNKVIKASHKKDSSFIRIHKLIKVLNFTMKATDLQLSDVFLKALVHLPLEYNSAVYSRIFDDFGTHYFTSGSLGGKYDLIYQFSRQELQNSGLTEEEAQNCVQYETKKLKFLYMEIHKEDTCTKNKLSEKYGGSFLQGSEKSISLVQGGRSQQAAALAWEKGTSGPEENVYSEWLESVKENPAVVDYKLAPITDLVRNIPCAVTKRNNLRRALQEYAAKFDPCQCAPCPNNGRPRLSGTECLCVCQSGTYGENCERRSPGYKSDAVDGNWGCWSSWSACNAAYRRSRTRECNNPAPQRGGQSCGGKDQQEEDCTVSIMENVGQPCINDDEEMKEVDLAEPEAESGCSQPPLPENAFTWNEKKLYSVGEEVEISCLTGFTAVGFQYLRCLPDRTWSQGDVECQRTSCLKPVVQDVLTISPFQRVYQIGESIELTCPRGFVVAGPSRYTCKEDSWTPPISNSLTCEQAILTKSKDLCPPGQKQSGSKCICMSPEEDCSAYSEDLCIFDGGSSQYFTSSACKFLAGKCLNNTQSHFVHSGSCQEGLQLEWGLERLKLAVNSTKRVSCGYNTCYDWENCSAHTSNCVCLLPPQCSKDENQLYCVKIGSSMREKTVNICTLGAVRCANIKVEILNPGRCPD</sequence>